<feature type="chain" id="PRO_0000199231" description="Phycobilisome 8.9 kDa linker polypeptide, phycocyanin-associated, rod">
    <location>
        <begin position="1"/>
        <end position="78"/>
    </location>
</feature>
<feature type="domain" description="CpcD-like" evidence="2">
    <location>
        <begin position="17"/>
        <end position="75"/>
    </location>
</feature>
<accession>P50035</accession>
<name>PYS1_THEVB</name>
<comment type="function">
    <text>Rod linker protein, associated with phycocyanin. Linker polypeptides determine the state of aggregation and the location of the disk-shaped phycobiliprotein units within the phycobilisome and modulate their spectroscopic properties in order to mediate a directed and optimal energy transfer.</text>
</comment>
<comment type="subcellular location">
    <subcellularLocation>
        <location evidence="1">Cellular thylakoid membrane</location>
        <topology evidence="1">Peripheral membrane protein</topology>
        <orientation evidence="1">Cytoplasmic side</orientation>
    </subcellularLocation>
    <text evidence="3">This protein occurs in the rod, it is associated with phycocyanin.</text>
</comment>
<comment type="similarity">
    <text evidence="3">Belongs to the phycobilisome linker protein family.</text>
</comment>
<evidence type="ECO:0000250" key="1"/>
<evidence type="ECO:0000255" key="2">
    <source>
        <dbReference type="PROSITE-ProRule" id="PRU00771"/>
    </source>
</evidence>
<evidence type="ECO:0000305" key="3"/>
<dbReference type="EMBL" id="D13173">
    <property type="protein sequence ID" value="BAA02458.1"/>
    <property type="molecule type" value="Genomic_DNA"/>
</dbReference>
<dbReference type="EMBL" id="BA000039">
    <property type="protein sequence ID" value="BAC09512.1"/>
    <property type="molecule type" value="Genomic_DNA"/>
</dbReference>
<dbReference type="RefSeq" id="NP_682750.1">
    <property type="nucleotide sequence ID" value="NC_004113.1"/>
</dbReference>
<dbReference type="RefSeq" id="WP_011057795.1">
    <property type="nucleotide sequence ID" value="NC_004113.1"/>
</dbReference>
<dbReference type="PDB" id="7VEB">
    <property type="method" value="EM"/>
    <property type="resolution" value="4.20 A"/>
    <property type="chains" value="Y=1-78"/>
</dbReference>
<dbReference type="PDBsum" id="7VEB"/>
<dbReference type="EMDB" id="EMD-31945"/>
<dbReference type="SMR" id="P50035"/>
<dbReference type="STRING" id="197221.gene:10748567"/>
<dbReference type="EnsemblBacteria" id="BAC09512">
    <property type="protein sequence ID" value="BAC09512"/>
    <property type="gene ID" value="BAC09512"/>
</dbReference>
<dbReference type="KEGG" id="tel:tsr1960"/>
<dbReference type="PATRIC" id="fig|197221.4.peg.2050"/>
<dbReference type="eggNOG" id="COG0369">
    <property type="taxonomic scope" value="Bacteria"/>
</dbReference>
<dbReference type="Proteomes" id="UP000000440">
    <property type="component" value="Chromosome"/>
</dbReference>
<dbReference type="GO" id="GO:0030089">
    <property type="term" value="C:phycobilisome"/>
    <property type="evidence" value="ECO:0007669"/>
    <property type="project" value="UniProtKB-KW"/>
</dbReference>
<dbReference type="GO" id="GO:0031676">
    <property type="term" value="C:plasma membrane-derived thylakoid membrane"/>
    <property type="evidence" value="ECO:0007669"/>
    <property type="project" value="UniProtKB-SubCell"/>
</dbReference>
<dbReference type="GO" id="GO:0015979">
    <property type="term" value="P:photosynthesis"/>
    <property type="evidence" value="ECO:0007669"/>
    <property type="project" value="UniProtKB-KW"/>
</dbReference>
<dbReference type="InterPro" id="IPR008213">
    <property type="entry name" value="CpcD-like_dom"/>
</dbReference>
<dbReference type="Pfam" id="PF01383">
    <property type="entry name" value="CpcD"/>
    <property type="match status" value="1"/>
</dbReference>
<dbReference type="SMART" id="SM01094">
    <property type="entry name" value="CpcD"/>
    <property type="match status" value="1"/>
</dbReference>
<dbReference type="PROSITE" id="PS51441">
    <property type="entry name" value="CPCD_LIKE"/>
    <property type="match status" value="1"/>
</dbReference>
<reference key="1">
    <citation type="submission" date="1992-09" db="EMBL/GenBank/DDBJ databases">
        <title>Cloning and sequencing of the phycocyanin operon from the thermophilic cyanobacterium Synechococcus elongatus.</title>
        <authorList>
            <person name="Shimazu T."/>
            <person name="Soga M."/>
            <person name="Hirano M."/>
            <person name="Katoh S."/>
        </authorList>
    </citation>
    <scope>NUCLEOTIDE SEQUENCE [GENOMIC DNA]</scope>
</reference>
<reference key="2">
    <citation type="journal article" date="2002" name="DNA Res.">
        <title>Complete genome structure of the thermophilic cyanobacterium Thermosynechococcus elongatus BP-1.</title>
        <authorList>
            <person name="Nakamura Y."/>
            <person name="Kaneko T."/>
            <person name="Sato S."/>
            <person name="Ikeuchi M."/>
            <person name="Katoh H."/>
            <person name="Sasamoto S."/>
            <person name="Watanabe A."/>
            <person name="Iriguchi M."/>
            <person name="Kawashima K."/>
            <person name="Kimura T."/>
            <person name="Kishida Y."/>
            <person name="Kiyokawa C."/>
            <person name="Kohara M."/>
            <person name="Matsumoto M."/>
            <person name="Matsuno A."/>
            <person name="Nakazaki N."/>
            <person name="Shimpo S."/>
            <person name="Sugimoto M."/>
            <person name="Takeuchi C."/>
            <person name="Yamada M."/>
            <person name="Tabata S."/>
        </authorList>
    </citation>
    <scope>NUCLEOTIDE SEQUENCE [LARGE SCALE GENOMIC DNA]</scope>
    <source>
        <strain>NIES-2133 / IAM M-273 / BP-1</strain>
    </source>
</reference>
<proteinExistence type="evidence at protein level"/>
<protein>
    <recommendedName>
        <fullName>Phycobilisome 8.9 kDa linker polypeptide, phycocyanin-associated, rod</fullName>
    </recommendedName>
    <alternativeName>
        <fullName>Rod-capping linker protein</fullName>
    </alternativeName>
</protein>
<organism>
    <name type="scientific">Thermosynechococcus vestitus (strain NIES-2133 / IAM M-273 / BP-1)</name>
    <dbReference type="NCBI Taxonomy" id="197221"/>
    <lineage>
        <taxon>Bacteria</taxon>
        <taxon>Bacillati</taxon>
        <taxon>Cyanobacteriota</taxon>
        <taxon>Cyanophyceae</taxon>
        <taxon>Acaryochloridales</taxon>
        <taxon>Thermosynechococcaceae</taxon>
        <taxon>Thermosynechococcus</taxon>
    </lineage>
</organism>
<keyword id="KW-0002">3D-structure</keyword>
<keyword id="KW-0042">Antenna complex</keyword>
<keyword id="KW-0472">Membrane</keyword>
<keyword id="KW-0602">Photosynthesis</keyword>
<keyword id="KW-0605">Phycobilisome</keyword>
<keyword id="KW-1185">Reference proteome</keyword>
<keyword id="KW-0793">Thylakoid</keyword>
<gene>
    <name type="primary">cpcD</name>
    <name type="ordered locus">tsr1960</name>
</gene>
<sequence length="78" mass="8672">MFGQTASGSAALSPSGARVFRYEVVGLRQNEETDRMEFPIRRSGSTFITVPYNRMNEEMQRITRMGGKIVSITPVVAS</sequence>